<accession>F4JWP9</accession>
<reference key="1">
    <citation type="journal article" date="2000" name="Nature">
        <title>Sequence and analysis of chromosome 5 of the plant Arabidopsis thaliana.</title>
        <authorList>
            <person name="Tabata S."/>
            <person name="Kaneko T."/>
            <person name="Nakamura Y."/>
            <person name="Kotani H."/>
            <person name="Kato T."/>
            <person name="Asamizu E."/>
            <person name="Miyajima N."/>
            <person name="Sasamoto S."/>
            <person name="Kimura T."/>
            <person name="Hosouchi T."/>
            <person name="Kawashima K."/>
            <person name="Kohara M."/>
            <person name="Matsumoto M."/>
            <person name="Matsuno A."/>
            <person name="Muraki A."/>
            <person name="Nakayama S."/>
            <person name="Nakazaki N."/>
            <person name="Naruo K."/>
            <person name="Okumura S."/>
            <person name="Shinpo S."/>
            <person name="Takeuchi C."/>
            <person name="Wada T."/>
            <person name="Watanabe A."/>
            <person name="Yamada M."/>
            <person name="Yasuda M."/>
            <person name="Sato S."/>
            <person name="de la Bastide M."/>
            <person name="Huang E."/>
            <person name="Spiegel L."/>
            <person name="Gnoj L."/>
            <person name="O'Shaughnessy A."/>
            <person name="Preston R."/>
            <person name="Habermann K."/>
            <person name="Murray J."/>
            <person name="Johnson D."/>
            <person name="Rohlfing T."/>
            <person name="Nelson J."/>
            <person name="Stoneking T."/>
            <person name="Pepin K."/>
            <person name="Spieth J."/>
            <person name="Sekhon M."/>
            <person name="Armstrong J."/>
            <person name="Becker M."/>
            <person name="Belter E."/>
            <person name="Cordum H."/>
            <person name="Cordes M."/>
            <person name="Courtney L."/>
            <person name="Courtney W."/>
            <person name="Dante M."/>
            <person name="Du H."/>
            <person name="Edwards J."/>
            <person name="Fryman J."/>
            <person name="Haakensen B."/>
            <person name="Lamar E."/>
            <person name="Latreille P."/>
            <person name="Leonard S."/>
            <person name="Meyer R."/>
            <person name="Mulvaney E."/>
            <person name="Ozersky P."/>
            <person name="Riley A."/>
            <person name="Strowmatt C."/>
            <person name="Wagner-McPherson C."/>
            <person name="Wollam A."/>
            <person name="Yoakum M."/>
            <person name="Bell M."/>
            <person name="Dedhia N."/>
            <person name="Parnell L."/>
            <person name="Shah R."/>
            <person name="Rodriguez M."/>
            <person name="Hoon See L."/>
            <person name="Vil D."/>
            <person name="Baker J."/>
            <person name="Kirchoff K."/>
            <person name="Toth K."/>
            <person name="King L."/>
            <person name="Bahret A."/>
            <person name="Miller B."/>
            <person name="Marra M.A."/>
            <person name="Martienssen R."/>
            <person name="McCombie W.R."/>
            <person name="Wilson R.K."/>
            <person name="Murphy G."/>
            <person name="Bancroft I."/>
            <person name="Volckaert G."/>
            <person name="Wambutt R."/>
            <person name="Duesterhoeft A."/>
            <person name="Stiekema W."/>
            <person name="Pohl T."/>
            <person name="Entian K.-D."/>
            <person name="Terryn N."/>
            <person name="Hartley N."/>
            <person name="Bent E."/>
            <person name="Johnson S."/>
            <person name="Langham S.-A."/>
            <person name="McCullagh B."/>
            <person name="Robben J."/>
            <person name="Grymonprez B."/>
            <person name="Zimmermann W."/>
            <person name="Ramsperger U."/>
            <person name="Wedler H."/>
            <person name="Balke K."/>
            <person name="Wedler E."/>
            <person name="Peters S."/>
            <person name="van Staveren M."/>
            <person name="Dirkse W."/>
            <person name="Mooijman P."/>
            <person name="Klein Lankhorst R."/>
            <person name="Weitzenegger T."/>
            <person name="Bothe G."/>
            <person name="Rose M."/>
            <person name="Hauf J."/>
            <person name="Berneiser S."/>
            <person name="Hempel S."/>
            <person name="Feldpausch M."/>
            <person name="Lamberth S."/>
            <person name="Villarroel R."/>
            <person name="Gielen J."/>
            <person name="Ardiles W."/>
            <person name="Bents O."/>
            <person name="Lemcke K."/>
            <person name="Kolesov G."/>
            <person name="Mayer K.F.X."/>
            <person name="Rudd S."/>
            <person name="Schoof H."/>
            <person name="Schueller C."/>
            <person name="Zaccaria P."/>
            <person name="Mewes H.-W."/>
            <person name="Bevan M."/>
            <person name="Fransz P.F."/>
        </authorList>
    </citation>
    <scope>NUCLEOTIDE SEQUENCE [LARGE SCALE GENOMIC DNA]</scope>
    <source>
        <strain>cv. Columbia</strain>
    </source>
</reference>
<reference key="2">
    <citation type="journal article" date="2017" name="Plant J.">
        <title>Araport11: a complete reannotation of the Arabidopsis thaliana reference genome.</title>
        <authorList>
            <person name="Cheng C.Y."/>
            <person name="Krishnakumar V."/>
            <person name="Chan A.P."/>
            <person name="Thibaud-Nissen F."/>
            <person name="Schobel S."/>
            <person name="Town C.D."/>
        </authorList>
    </citation>
    <scope>GENOME REANNOTATION</scope>
    <source>
        <strain>cv. Columbia</strain>
    </source>
</reference>
<reference key="3">
    <citation type="journal article" date="2007" name="Sex. Plant Reprod.">
        <title>Segregation distortion in Arabidopsis gametophytic factor 1 (gfa1) mutants is caused by a deficiency of an essential RNA splicing factor.</title>
        <authorList>
            <person name="Coury D.A."/>
            <person name="Zhang C."/>
            <person name="Ara Ko A."/>
            <person name="Skaggs M.I."/>
            <person name="Christensen C.A."/>
            <person name="Drews G.N."/>
            <person name="Feldmann K.A."/>
            <person name="Yadegari R."/>
        </authorList>
    </citation>
    <scope>TISSUE SPECIFICITY</scope>
    <scope>DISRUPTION PHENOTYPE</scope>
</reference>
<reference key="4">
    <citation type="journal article" date="2009" name="J. Integr. Plant Biol.">
        <title>GAMETOPHYTIC FACTOR 1, involved in pre-mRNA splicing, is essential for megagametogenesis and embryogenesis in Arabidopsis.</title>
        <authorList>
            <person name="Liu M."/>
            <person name="Yuan L."/>
            <person name="Liu N.Y."/>
            <person name="Shi D.Q."/>
            <person name="Liu J."/>
            <person name="Yang W.C."/>
        </authorList>
    </citation>
    <scope>DEVELOPMENTAL STAGE</scope>
</reference>
<protein>
    <recommendedName>
        <fullName evidence="8">109 kDa U5 small nuclear ribonucleoprotein component GFL</fullName>
    </recommendedName>
    <alternativeName>
        <fullName evidence="7">Protein GFA1-LIKE</fullName>
    </alternativeName>
    <alternativeName>
        <fullName evidence="8">SNU114 homolog</fullName>
    </alternativeName>
</protein>
<sequence>MDGSLYGECGNYIGPEIESDRDSDDSVEDEDLQEPGGSNGWITTINENQNIVLPEDKKYYPIAKEVYGEDVETLVMDEDEQSLEQPIIKPVRDIRFEVGVIKDQTTTYVSTLFLIGLMSNPALVRNVALVGHLQHGKTVFMDMLVEQTHRMSTFNAENDKHMRYTDTRVDEQERNISIKAVPMSLVLEDSRSKSYLCNIMDTPGNVNFSDEMTASLRLADGAVFIVDAAQGVMVNTERAIRHAIQDHLPIVVVINKVDRLITELKLPPRDAYYKLRYTIEVINNHISAASTNAADLPLIDPAAGNVCFASGTAGWSFTLQSFARMYAKLHGVAMDVDKFASRLWGDVYYHPDTRVFNTSPPVGGGERAFVQFILEPLYKIYSQVIGEHKKSVETTLAELGVTLSNSAYKLNVRPLLRLACSSVFGSASGFTDMLVKHIPSPREAAARKVDHSYTGTKDSPIYESMVECDPSGPLMVNVTKLYPKSDTSVFDVFGRVYSGRLQTGQSVRVLGEGYSPEDEEDMTIKEVTKLWIYQARYRIPVSSAPPGSWVLIEGVDASIMKTATLCNASYDEDVYIFRALKFNTLPVVKTATEPLNPSELPKMVEGLRKISKSYPLAITKVEESGEHTILGTGELYLDSIIKDLRELYSEVQVKVADPVVSFCETVVESSSMKCFAETPNKKNKLTMIAEPLDRGLAEDIENGVVSIDWNRVQLGDFFRTKYDWDLLAARSIWAFGPDKQGTNILLDDTLPTEVDRNLMMGVKDSIVQGFQWGAREGPLCDEPIRNVKFKIVDARIAPEPLHRGSGQMIPTARRVAYSAFLMATPRLMEPVYYVEIQTPIDCVTAIYTVLSRRRGYVTSDVPQPGTPAYIVKAFLPVIESFGFETDLRYHTQGQAFCLSVFDHWAIVPGDPLDKAIQLRPLEPAPIQHLAREFMVKTRRRKGMSEDVSGNKFFDEAMMVELAQQTGDLHLQMI</sequence>
<organism>
    <name type="scientific">Arabidopsis thaliana</name>
    <name type="common">Mouse-ear cress</name>
    <dbReference type="NCBI Taxonomy" id="3702"/>
    <lineage>
        <taxon>Eukaryota</taxon>
        <taxon>Viridiplantae</taxon>
        <taxon>Streptophyta</taxon>
        <taxon>Embryophyta</taxon>
        <taxon>Tracheophyta</taxon>
        <taxon>Spermatophyta</taxon>
        <taxon>Magnoliopsida</taxon>
        <taxon>eudicotyledons</taxon>
        <taxon>Gunneridae</taxon>
        <taxon>Pentapetalae</taxon>
        <taxon>rosids</taxon>
        <taxon>malvids</taxon>
        <taxon>Brassicales</taxon>
        <taxon>Brassicaceae</taxon>
        <taxon>Camelineae</taxon>
        <taxon>Arabidopsis</taxon>
    </lineage>
</organism>
<proteinExistence type="evidence at transcript level"/>
<dbReference type="EMBL" id="AC006259">
    <property type="status" value="NOT_ANNOTATED_CDS"/>
    <property type="molecule type" value="Genomic_DNA"/>
</dbReference>
<dbReference type="EMBL" id="CP002688">
    <property type="protein sequence ID" value="AED93415.1"/>
    <property type="molecule type" value="Genomic_DNA"/>
</dbReference>
<dbReference type="EMBL" id="CP002688">
    <property type="protein sequence ID" value="ANM69055.1"/>
    <property type="molecule type" value="Genomic_DNA"/>
</dbReference>
<dbReference type="RefSeq" id="NP_001318643.1">
    <property type="nucleotide sequence ID" value="NM_001343914.1"/>
</dbReference>
<dbReference type="RefSeq" id="NP_197905.1">
    <property type="nucleotide sequence ID" value="NM_122432.2"/>
</dbReference>
<dbReference type="SMR" id="F4JWP9"/>
<dbReference type="FunCoup" id="F4JWP9">
    <property type="interactions" value="4382"/>
</dbReference>
<dbReference type="STRING" id="3702.F4JWP9"/>
<dbReference type="GlyGen" id="F4JWP9">
    <property type="glycosylation" value="1 site"/>
</dbReference>
<dbReference type="PaxDb" id="3702-AT5G25230.1"/>
<dbReference type="ProteomicsDB" id="247132"/>
<dbReference type="EnsemblPlants" id="AT5G25230.1">
    <property type="protein sequence ID" value="AT5G25230.1"/>
    <property type="gene ID" value="AT5G25230"/>
</dbReference>
<dbReference type="EnsemblPlants" id="AT5G25230.2">
    <property type="protein sequence ID" value="AT5G25230.2"/>
    <property type="gene ID" value="AT5G25230"/>
</dbReference>
<dbReference type="GeneID" id="832594"/>
<dbReference type="Gramene" id="AT5G25230.1">
    <property type="protein sequence ID" value="AT5G25230.1"/>
    <property type="gene ID" value="AT5G25230"/>
</dbReference>
<dbReference type="Gramene" id="AT5G25230.2">
    <property type="protein sequence ID" value="AT5G25230.2"/>
    <property type="gene ID" value="AT5G25230"/>
</dbReference>
<dbReference type="KEGG" id="ath:AT5G25230"/>
<dbReference type="Araport" id="AT5G25230"/>
<dbReference type="TAIR" id="AT5G25230"/>
<dbReference type="eggNOG" id="KOG0468">
    <property type="taxonomic scope" value="Eukaryota"/>
</dbReference>
<dbReference type="HOGENOM" id="CLU_002794_11_2_1"/>
<dbReference type="InParanoid" id="F4JWP9"/>
<dbReference type="OMA" id="WITTINE"/>
<dbReference type="PhylomeDB" id="F4JWP9"/>
<dbReference type="CD-CODE" id="4299E36E">
    <property type="entry name" value="Nucleolus"/>
</dbReference>
<dbReference type="PRO" id="PR:F4JWP9"/>
<dbReference type="Proteomes" id="UP000006548">
    <property type="component" value="Chromosome 5"/>
</dbReference>
<dbReference type="ExpressionAtlas" id="F4JWP9">
    <property type="expression patterns" value="baseline and differential"/>
</dbReference>
<dbReference type="GO" id="GO:0016607">
    <property type="term" value="C:nuclear speck"/>
    <property type="evidence" value="ECO:0007669"/>
    <property type="project" value="UniProtKB-SubCell"/>
</dbReference>
<dbReference type="GO" id="GO:0005730">
    <property type="term" value="C:nucleolus"/>
    <property type="evidence" value="ECO:0007005"/>
    <property type="project" value="TAIR"/>
</dbReference>
<dbReference type="GO" id="GO:0009506">
    <property type="term" value="C:plasmodesma"/>
    <property type="evidence" value="ECO:0007005"/>
    <property type="project" value="TAIR"/>
</dbReference>
<dbReference type="GO" id="GO:0009536">
    <property type="term" value="C:plastid"/>
    <property type="evidence" value="ECO:0007005"/>
    <property type="project" value="TAIR"/>
</dbReference>
<dbReference type="GO" id="GO:0005681">
    <property type="term" value="C:spliceosomal complex"/>
    <property type="evidence" value="ECO:0007669"/>
    <property type="project" value="UniProtKB-KW"/>
</dbReference>
<dbReference type="GO" id="GO:0005525">
    <property type="term" value="F:GTP binding"/>
    <property type="evidence" value="ECO:0007669"/>
    <property type="project" value="UniProtKB-KW"/>
</dbReference>
<dbReference type="GO" id="GO:0003924">
    <property type="term" value="F:GTPase activity"/>
    <property type="evidence" value="ECO:0007669"/>
    <property type="project" value="InterPro"/>
</dbReference>
<dbReference type="GO" id="GO:0006397">
    <property type="term" value="P:mRNA processing"/>
    <property type="evidence" value="ECO:0007669"/>
    <property type="project" value="UniProtKB-KW"/>
</dbReference>
<dbReference type="GO" id="GO:0008380">
    <property type="term" value="P:RNA splicing"/>
    <property type="evidence" value="ECO:0007669"/>
    <property type="project" value="UniProtKB-KW"/>
</dbReference>
<dbReference type="CDD" id="cd04098">
    <property type="entry name" value="eEF2_C_snRNP"/>
    <property type="match status" value="1"/>
</dbReference>
<dbReference type="CDD" id="cd04090">
    <property type="entry name" value="EF2_II_snRNP"/>
    <property type="match status" value="1"/>
</dbReference>
<dbReference type="CDD" id="cd01683">
    <property type="entry name" value="EF2_IV_snRNP"/>
    <property type="match status" value="1"/>
</dbReference>
<dbReference type="CDD" id="cd16264">
    <property type="entry name" value="snRNP_III"/>
    <property type="match status" value="1"/>
</dbReference>
<dbReference type="CDD" id="cd04167">
    <property type="entry name" value="Snu114p"/>
    <property type="match status" value="1"/>
</dbReference>
<dbReference type="FunFam" id="3.30.70.240:FF:000004">
    <property type="entry name" value="116 kDa U5 small nuclear ribonucleoprotein"/>
    <property type="match status" value="1"/>
</dbReference>
<dbReference type="FunFam" id="2.40.30.10:FF:000029">
    <property type="entry name" value="116 kDa U5 small nuclear ribonucleoprotein component"/>
    <property type="match status" value="1"/>
</dbReference>
<dbReference type="FunFam" id="3.30.230.10:FF:000009">
    <property type="entry name" value="116 kDa U5 small nuclear ribonucleoprotein component"/>
    <property type="match status" value="1"/>
</dbReference>
<dbReference type="FunFam" id="3.90.1430.10:FF:000001">
    <property type="entry name" value="116 kDa U5 small nuclear ribonucleoprotein component"/>
    <property type="match status" value="1"/>
</dbReference>
<dbReference type="FunFam" id="3.30.70.870:FF:000002">
    <property type="entry name" value="Translation elongation factor 2"/>
    <property type="match status" value="1"/>
</dbReference>
<dbReference type="FunFam" id="3.40.50.300:FF:000646">
    <property type="entry name" value="U5 small nuclear ribonucleoprotein component"/>
    <property type="match status" value="1"/>
</dbReference>
<dbReference type="Gene3D" id="3.30.230.10">
    <property type="match status" value="1"/>
</dbReference>
<dbReference type="Gene3D" id="3.30.70.240">
    <property type="match status" value="1"/>
</dbReference>
<dbReference type="Gene3D" id="3.30.70.870">
    <property type="entry name" value="Elongation Factor G (Translational Gtpase), domain 3"/>
    <property type="match status" value="1"/>
</dbReference>
<dbReference type="Gene3D" id="3.40.50.300">
    <property type="entry name" value="P-loop containing nucleotide triphosphate hydrolases"/>
    <property type="match status" value="1"/>
</dbReference>
<dbReference type="Gene3D" id="2.40.30.10">
    <property type="entry name" value="Translation factors"/>
    <property type="match status" value="1"/>
</dbReference>
<dbReference type="Gene3D" id="3.90.1430.10">
    <property type="entry name" value="Yeast translation eEF2 (G' domain)"/>
    <property type="match status" value="1"/>
</dbReference>
<dbReference type="InterPro" id="IPR035647">
    <property type="entry name" value="EFG_III/V"/>
</dbReference>
<dbReference type="InterPro" id="IPR000640">
    <property type="entry name" value="EFG_V-like"/>
</dbReference>
<dbReference type="InterPro" id="IPR004161">
    <property type="entry name" value="EFTu-like_2"/>
</dbReference>
<dbReference type="InterPro" id="IPR031950">
    <property type="entry name" value="EFTUD2_N"/>
</dbReference>
<dbReference type="InterPro" id="IPR027417">
    <property type="entry name" value="P-loop_NTPase"/>
</dbReference>
<dbReference type="InterPro" id="IPR020568">
    <property type="entry name" value="Ribosomal_Su5_D2-typ_SF"/>
</dbReference>
<dbReference type="InterPro" id="IPR014721">
    <property type="entry name" value="Ribsml_uS5_D2-typ_fold_subgr"/>
</dbReference>
<dbReference type="InterPro" id="IPR005225">
    <property type="entry name" value="Small_GTP-bd"/>
</dbReference>
<dbReference type="InterPro" id="IPR044121">
    <property type="entry name" value="Snu114_GTP-bd"/>
</dbReference>
<dbReference type="InterPro" id="IPR000795">
    <property type="entry name" value="T_Tr_GTP-bd_dom"/>
</dbReference>
<dbReference type="InterPro" id="IPR009000">
    <property type="entry name" value="Transl_B-barrel_sf"/>
</dbReference>
<dbReference type="InterPro" id="IPR005517">
    <property type="entry name" value="Transl_elong_EFG/EF2_IV"/>
</dbReference>
<dbReference type="InterPro" id="IPR035655">
    <property type="entry name" value="U5-116kDa_C"/>
</dbReference>
<dbReference type="NCBIfam" id="TIGR00231">
    <property type="entry name" value="small_GTP"/>
    <property type="match status" value="1"/>
</dbReference>
<dbReference type="PANTHER" id="PTHR42908:SF6">
    <property type="entry name" value="116 KDA U5 SMALL NUCLEAR RIBONUCLEOPROTEIN COMPONENT"/>
    <property type="match status" value="1"/>
</dbReference>
<dbReference type="PANTHER" id="PTHR42908">
    <property type="entry name" value="TRANSLATION ELONGATION FACTOR-RELATED"/>
    <property type="match status" value="1"/>
</dbReference>
<dbReference type="Pfam" id="PF00679">
    <property type="entry name" value="EFG_C"/>
    <property type="match status" value="1"/>
</dbReference>
<dbReference type="Pfam" id="PF03764">
    <property type="entry name" value="EFG_IV"/>
    <property type="match status" value="1"/>
</dbReference>
<dbReference type="Pfam" id="PF16004">
    <property type="entry name" value="EFTUD2"/>
    <property type="match status" value="1"/>
</dbReference>
<dbReference type="Pfam" id="PF00009">
    <property type="entry name" value="GTP_EFTU"/>
    <property type="match status" value="1"/>
</dbReference>
<dbReference type="Pfam" id="PF03144">
    <property type="entry name" value="GTP_EFTU_D2"/>
    <property type="match status" value="1"/>
</dbReference>
<dbReference type="PRINTS" id="PR00315">
    <property type="entry name" value="ELONGATNFCT"/>
</dbReference>
<dbReference type="SMART" id="SM00838">
    <property type="entry name" value="EFG_C"/>
    <property type="match status" value="1"/>
</dbReference>
<dbReference type="SMART" id="SM00889">
    <property type="entry name" value="EFG_IV"/>
    <property type="match status" value="1"/>
</dbReference>
<dbReference type="SUPFAM" id="SSF54980">
    <property type="entry name" value="EF-G C-terminal domain-like"/>
    <property type="match status" value="2"/>
</dbReference>
<dbReference type="SUPFAM" id="SSF52540">
    <property type="entry name" value="P-loop containing nucleoside triphosphate hydrolases"/>
    <property type="match status" value="1"/>
</dbReference>
<dbReference type="SUPFAM" id="SSF54211">
    <property type="entry name" value="Ribosomal protein S5 domain 2-like"/>
    <property type="match status" value="1"/>
</dbReference>
<dbReference type="SUPFAM" id="SSF50447">
    <property type="entry name" value="Translation proteins"/>
    <property type="match status" value="1"/>
</dbReference>
<dbReference type="PROSITE" id="PS51722">
    <property type="entry name" value="G_TR_2"/>
    <property type="match status" value="1"/>
</dbReference>
<comment type="function">
    <text evidence="1">Splicing factor involved in pre-mRNA splicing and component of the spliceosome.</text>
</comment>
<comment type="subcellular location">
    <subcellularLocation>
        <location evidence="1">Nucleus speckle</location>
    </subcellularLocation>
</comment>
<comment type="tissue specificity">
    <text evidence="6">Expressed in flower buds, open flowers and siliques. Expressed at low levels in rosettes leaves, cauline leaves and stems.</text>
</comment>
<comment type="developmental stage">
    <text evidence="5">Expressed in developing embryos until heart stage.</text>
</comment>
<comment type="disruption phenotype">
    <text evidence="6">No visible phenotype under normal growth conditions.</text>
</comment>
<comment type="similarity">
    <text evidence="3">Belongs to the TRAFAC class translation factor GTPase superfamily. Classic translation factor GTPase family.</text>
</comment>
<keyword id="KW-0342">GTP-binding</keyword>
<keyword id="KW-0507">mRNA processing</keyword>
<keyword id="KW-0508">mRNA splicing</keyword>
<keyword id="KW-0547">Nucleotide-binding</keyword>
<keyword id="KW-0539">Nucleus</keyword>
<keyword id="KW-1185">Reference proteome</keyword>
<keyword id="KW-0747">Spliceosome</keyword>
<evidence type="ECO:0000250" key="1">
    <source>
        <dbReference type="UniProtKB" id="Q9LNC5"/>
    </source>
</evidence>
<evidence type="ECO:0000255" key="2"/>
<evidence type="ECO:0000255" key="3">
    <source>
        <dbReference type="PROSITE-ProRule" id="PRU01059"/>
    </source>
</evidence>
<evidence type="ECO:0000256" key="4">
    <source>
        <dbReference type="SAM" id="MobiDB-lite"/>
    </source>
</evidence>
<evidence type="ECO:0000269" key="5">
    <source>
    </source>
</evidence>
<evidence type="ECO:0000269" key="6">
    <source ref="3"/>
</evidence>
<evidence type="ECO:0000303" key="7">
    <source ref="3"/>
</evidence>
<evidence type="ECO:0000305" key="8"/>
<evidence type="ECO:0000312" key="9">
    <source>
        <dbReference type="Araport" id="AT5G25230"/>
    </source>
</evidence>
<feature type="chain" id="PRO_0000436562" description="109 kDa U5 small nuclear ribonucleoprotein component GFL">
    <location>
        <begin position="1"/>
        <end position="973"/>
    </location>
</feature>
<feature type="domain" description="tr-type G" evidence="3">
    <location>
        <begin position="122"/>
        <end position="408"/>
    </location>
</feature>
<feature type="region of interest" description="Disordered" evidence="4">
    <location>
        <begin position="1"/>
        <end position="40"/>
    </location>
</feature>
<feature type="region of interest" description="G1" evidence="3">
    <location>
        <begin position="131"/>
        <end position="138"/>
    </location>
</feature>
<feature type="region of interest" description="G2" evidence="3">
    <location>
        <begin position="175"/>
        <end position="179"/>
    </location>
</feature>
<feature type="region of interest" description="G3" evidence="3">
    <location>
        <begin position="201"/>
        <end position="204"/>
    </location>
</feature>
<feature type="region of interest" description="G4" evidence="3">
    <location>
        <begin position="255"/>
        <end position="258"/>
    </location>
</feature>
<feature type="region of interest" description="G5" evidence="3">
    <location>
        <begin position="381"/>
        <end position="383"/>
    </location>
</feature>
<feature type="compositionally biased region" description="Acidic residues" evidence="4">
    <location>
        <begin position="17"/>
        <end position="33"/>
    </location>
</feature>
<feature type="binding site" evidence="2">
    <location>
        <begin position="131"/>
        <end position="138"/>
    </location>
    <ligand>
        <name>GTP</name>
        <dbReference type="ChEBI" id="CHEBI:37565"/>
    </ligand>
</feature>
<feature type="binding site" evidence="2">
    <location>
        <begin position="201"/>
        <end position="205"/>
    </location>
    <ligand>
        <name>GTP</name>
        <dbReference type="ChEBI" id="CHEBI:37565"/>
    </ligand>
</feature>
<feature type="binding site" evidence="2">
    <location>
        <begin position="255"/>
        <end position="258"/>
    </location>
    <ligand>
        <name>GTP</name>
        <dbReference type="ChEBI" id="CHEBI:37565"/>
    </ligand>
</feature>
<name>GFL_ARATH</name>
<gene>
    <name evidence="7" type="primary">GFL</name>
    <name evidence="9" type="ordered locus">At5g25230</name>
</gene>